<comment type="function">
    <text evidence="1">Catalyzes the condensation of isopentenyl diphosphate (IPP) with allylic pyrophosphates generating different type of terpenoids.</text>
</comment>
<comment type="cofactor">
    <cofactor evidence="1">
        <name>Mg(2+)</name>
        <dbReference type="ChEBI" id="CHEBI:18420"/>
    </cofactor>
    <text evidence="1">Binds 2 magnesium ions per subunit.</text>
</comment>
<comment type="subunit">
    <text evidence="1">Homodimer.</text>
</comment>
<comment type="similarity">
    <text evidence="1">Belongs to the UPP synthase family.</text>
</comment>
<dbReference type="EC" id="2.5.1.-" evidence="1"/>
<dbReference type="EMBL" id="CP000025">
    <property type="protein sequence ID" value="AAW35248.1"/>
    <property type="molecule type" value="Genomic_DNA"/>
</dbReference>
<dbReference type="RefSeq" id="WP_002852565.1">
    <property type="nucleotide sequence ID" value="NC_003912.7"/>
</dbReference>
<dbReference type="SMR" id="Q5HUX2"/>
<dbReference type="KEGG" id="cjr:CJE0911"/>
<dbReference type="HOGENOM" id="CLU_038505_1_1_7"/>
<dbReference type="GO" id="GO:0045547">
    <property type="term" value="F:ditrans,polycis-polyprenyl diphosphate synthase [(2E,6E)-farnesyl diphosphate specific] activity"/>
    <property type="evidence" value="ECO:0007669"/>
    <property type="project" value="TreeGrafter"/>
</dbReference>
<dbReference type="GO" id="GO:0000287">
    <property type="term" value="F:magnesium ion binding"/>
    <property type="evidence" value="ECO:0007669"/>
    <property type="project" value="UniProtKB-UniRule"/>
</dbReference>
<dbReference type="GO" id="GO:0016094">
    <property type="term" value="P:polyprenol biosynthetic process"/>
    <property type="evidence" value="ECO:0007669"/>
    <property type="project" value="TreeGrafter"/>
</dbReference>
<dbReference type="CDD" id="cd00475">
    <property type="entry name" value="Cis_IPPS"/>
    <property type="match status" value="1"/>
</dbReference>
<dbReference type="Gene3D" id="3.40.1180.10">
    <property type="entry name" value="Decaprenyl diphosphate synthase-like"/>
    <property type="match status" value="1"/>
</dbReference>
<dbReference type="HAMAP" id="MF_01139">
    <property type="entry name" value="ISPT"/>
    <property type="match status" value="1"/>
</dbReference>
<dbReference type="InterPro" id="IPR001441">
    <property type="entry name" value="UPP_synth-like"/>
</dbReference>
<dbReference type="InterPro" id="IPR018520">
    <property type="entry name" value="UPP_synth-like_CS"/>
</dbReference>
<dbReference type="InterPro" id="IPR036424">
    <property type="entry name" value="UPP_synth-like_sf"/>
</dbReference>
<dbReference type="NCBIfam" id="TIGR00055">
    <property type="entry name" value="uppS"/>
    <property type="match status" value="1"/>
</dbReference>
<dbReference type="PANTHER" id="PTHR10291:SF0">
    <property type="entry name" value="DEHYDRODOLICHYL DIPHOSPHATE SYNTHASE 2"/>
    <property type="match status" value="1"/>
</dbReference>
<dbReference type="PANTHER" id="PTHR10291">
    <property type="entry name" value="DEHYDRODOLICHYL DIPHOSPHATE SYNTHASE FAMILY MEMBER"/>
    <property type="match status" value="1"/>
</dbReference>
<dbReference type="Pfam" id="PF01255">
    <property type="entry name" value="Prenyltransf"/>
    <property type="match status" value="1"/>
</dbReference>
<dbReference type="SUPFAM" id="SSF64005">
    <property type="entry name" value="Undecaprenyl diphosphate synthase"/>
    <property type="match status" value="1"/>
</dbReference>
<dbReference type="PROSITE" id="PS01066">
    <property type="entry name" value="UPP_SYNTHASE"/>
    <property type="match status" value="1"/>
</dbReference>
<keyword id="KW-0460">Magnesium</keyword>
<keyword id="KW-0479">Metal-binding</keyword>
<keyword id="KW-0808">Transferase</keyword>
<organism>
    <name type="scientific">Campylobacter jejuni (strain RM1221)</name>
    <dbReference type="NCBI Taxonomy" id="195099"/>
    <lineage>
        <taxon>Bacteria</taxon>
        <taxon>Pseudomonadati</taxon>
        <taxon>Campylobacterota</taxon>
        <taxon>Epsilonproteobacteria</taxon>
        <taxon>Campylobacterales</taxon>
        <taxon>Campylobacteraceae</taxon>
        <taxon>Campylobacter</taxon>
    </lineage>
</organism>
<evidence type="ECO:0000255" key="1">
    <source>
        <dbReference type="HAMAP-Rule" id="MF_01139"/>
    </source>
</evidence>
<accession>Q5HUX2</accession>
<gene>
    <name evidence="1" type="primary">uppS</name>
    <name type="ordered locus">CJE0911</name>
</gene>
<protein>
    <recommendedName>
        <fullName evidence="1">Isoprenyl transferase</fullName>
        <ecNumber evidence="1">2.5.1.-</ecNumber>
    </recommendedName>
</protein>
<feature type="chain" id="PRO_0000123588" description="Isoprenyl transferase">
    <location>
        <begin position="1"/>
        <end position="222"/>
    </location>
</feature>
<feature type="active site" evidence="1">
    <location>
        <position position="12"/>
    </location>
</feature>
<feature type="active site" description="Proton acceptor" evidence="1">
    <location>
        <position position="60"/>
    </location>
</feature>
<feature type="binding site" evidence="1">
    <location>
        <position position="12"/>
    </location>
    <ligand>
        <name>Mg(2+)</name>
        <dbReference type="ChEBI" id="CHEBI:18420"/>
    </ligand>
</feature>
<feature type="binding site" evidence="1">
    <location>
        <begin position="13"/>
        <end position="16"/>
    </location>
    <ligand>
        <name>substrate</name>
    </ligand>
</feature>
<feature type="binding site" evidence="1">
    <location>
        <position position="17"/>
    </location>
    <ligand>
        <name>substrate</name>
    </ligand>
</feature>
<feature type="binding site" evidence="1">
    <location>
        <begin position="57"/>
        <end position="59"/>
    </location>
    <ligand>
        <name>substrate</name>
    </ligand>
</feature>
<feature type="binding site" evidence="1">
    <location>
        <position position="61"/>
    </location>
    <ligand>
        <name>substrate</name>
    </ligand>
</feature>
<feature type="binding site" evidence="1">
    <location>
        <position position="63"/>
    </location>
    <ligand>
        <name>substrate</name>
    </ligand>
</feature>
<feature type="binding site" evidence="1">
    <location>
        <position position="171"/>
    </location>
    <ligand>
        <name>substrate</name>
    </ligand>
</feature>
<feature type="binding site" evidence="1">
    <location>
        <begin position="177"/>
        <end position="179"/>
    </location>
    <ligand>
        <name>substrate</name>
    </ligand>
</feature>
<feature type="binding site" evidence="1">
    <location>
        <position position="190"/>
    </location>
    <ligand>
        <name>Mg(2+)</name>
        <dbReference type="ChEBI" id="CHEBI:18420"/>
    </ligand>
</feature>
<sequence>MNELKHLAVVMDGNRRWARAKGFLAKLGYSQGVKTMQKLMEVCMEENISNLSLFAFSTENWKRPKDEIDFIFELLDRCLDEALEKFEKNNVRLRAIGDLSRLEDKVREKITLVEEKTKHCDALCVNLAISYGARDEIIRAAKRVIEKKLELNEENLTQNLDLPLDVDLMLRVGNAKRLSNFLLWQCSYAEIYFSETLFPSLTKREFKRIIKEFRNRERTFGK</sequence>
<reference key="1">
    <citation type="journal article" date="2005" name="PLoS Biol.">
        <title>Major structural differences and novel potential virulence mechanisms from the genomes of multiple Campylobacter species.</title>
        <authorList>
            <person name="Fouts D.E."/>
            <person name="Mongodin E.F."/>
            <person name="Mandrell R.E."/>
            <person name="Miller W.G."/>
            <person name="Rasko D.A."/>
            <person name="Ravel J."/>
            <person name="Brinkac L.M."/>
            <person name="DeBoy R.T."/>
            <person name="Parker C.T."/>
            <person name="Daugherty S.C."/>
            <person name="Dodson R.J."/>
            <person name="Durkin A.S."/>
            <person name="Madupu R."/>
            <person name="Sullivan S.A."/>
            <person name="Shetty J.U."/>
            <person name="Ayodeji M.A."/>
            <person name="Shvartsbeyn A."/>
            <person name="Schatz M.C."/>
            <person name="Badger J.H."/>
            <person name="Fraser C.M."/>
            <person name="Nelson K.E."/>
        </authorList>
    </citation>
    <scope>NUCLEOTIDE SEQUENCE [LARGE SCALE GENOMIC DNA]</scope>
    <source>
        <strain>RM1221</strain>
    </source>
</reference>
<proteinExistence type="inferred from homology"/>
<name>ISPT_CAMJR</name>